<name>MUKF_ECO5E</name>
<comment type="function">
    <text evidence="1">Involved in chromosome condensation, segregation and cell cycle progression. May participate in facilitating chromosome segregation by condensation DNA from both sides of a centrally located replisome during cell division. Not required for mini-F plasmid partitioning. Probably acts via its interaction with MukB and MukE. Overexpression results in anucleate cells. It has a calcium binding activity.</text>
</comment>
<comment type="subunit">
    <text evidence="1">Interacts, and probably forms a ternary complex, with MukE and MukB via its C-terminal region. The complex formation is stimulated by calcium or magnesium. It is required for an interaction between MukE and MukB.</text>
</comment>
<comment type="subcellular location">
    <subcellularLocation>
        <location evidence="1">Cytoplasm</location>
        <location evidence="1">Nucleoid</location>
    </subcellularLocation>
    <text evidence="1">Restricted to the nucleoid region.</text>
</comment>
<comment type="similarity">
    <text evidence="1">Belongs to the MukF family.</text>
</comment>
<keyword id="KW-0106">Calcium</keyword>
<keyword id="KW-0131">Cell cycle</keyword>
<keyword id="KW-0132">Cell division</keyword>
<keyword id="KW-0159">Chromosome partition</keyword>
<keyword id="KW-0963">Cytoplasm</keyword>
<keyword id="KW-0226">DNA condensation</keyword>
<accession>B5YT56</accession>
<feature type="chain" id="PRO_1000187501" description="Chromosome partition protein MukF">
    <location>
        <begin position="1"/>
        <end position="440"/>
    </location>
</feature>
<feature type="region of interest" description="Leucine-zipper">
    <location>
        <begin position="208"/>
        <end position="236"/>
    </location>
</feature>
<dbReference type="EMBL" id="CP001164">
    <property type="protein sequence ID" value="ACI35786.1"/>
    <property type="molecule type" value="Genomic_DNA"/>
</dbReference>
<dbReference type="RefSeq" id="WP_001288845.1">
    <property type="nucleotide sequence ID" value="NC_011353.1"/>
</dbReference>
<dbReference type="SMR" id="B5YT56"/>
<dbReference type="KEGG" id="ecf:ECH74115_1083"/>
<dbReference type="HOGENOM" id="CLU_049853_0_0_6"/>
<dbReference type="GO" id="GO:0005737">
    <property type="term" value="C:cytoplasm"/>
    <property type="evidence" value="ECO:0007669"/>
    <property type="project" value="UniProtKB-UniRule"/>
</dbReference>
<dbReference type="GO" id="GO:0009295">
    <property type="term" value="C:nucleoid"/>
    <property type="evidence" value="ECO:0007669"/>
    <property type="project" value="UniProtKB-SubCell"/>
</dbReference>
<dbReference type="GO" id="GO:0005509">
    <property type="term" value="F:calcium ion binding"/>
    <property type="evidence" value="ECO:0007669"/>
    <property type="project" value="UniProtKB-UniRule"/>
</dbReference>
<dbReference type="GO" id="GO:0051301">
    <property type="term" value="P:cell division"/>
    <property type="evidence" value="ECO:0007669"/>
    <property type="project" value="UniProtKB-KW"/>
</dbReference>
<dbReference type="GO" id="GO:0030261">
    <property type="term" value="P:chromosome condensation"/>
    <property type="evidence" value="ECO:0007669"/>
    <property type="project" value="UniProtKB-KW"/>
</dbReference>
<dbReference type="GO" id="GO:0007059">
    <property type="term" value="P:chromosome segregation"/>
    <property type="evidence" value="ECO:0007669"/>
    <property type="project" value="UniProtKB-UniRule"/>
</dbReference>
<dbReference type="GO" id="GO:0006260">
    <property type="term" value="P:DNA replication"/>
    <property type="evidence" value="ECO:0007669"/>
    <property type="project" value="UniProtKB-UniRule"/>
</dbReference>
<dbReference type="CDD" id="cd16337">
    <property type="entry name" value="MukF_C"/>
    <property type="match status" value="1"/>
</dbReference>
<dbReference type="CDD" id="cd16335">
    <property type="entry name" value="MukF_N"/>
    <property type="match status" value="1"/>
</dbReference>
<dbReference type="Gene3D" id="1.20.58.590">
    <property type="entry name" value="Chromosome partition protein MukF, middle domain"/>
    <property type="match status" value="1"/>
</dbReference>
<dbReference type="Gene3D" id="1.10.225.40">
    <property type="entry name" value="MukF, C-terminal domain"/>
    <property type="match status" value="1"/>
</dbReference>
<dbReference type="Gene3D" id="1.10.10.10">
    <property type="entry name" value="Winged helix-like DNA-binding domain superfamily/Winged helix DNA-binding domain"/>
    <property type="match status" value="1"/>
</dbReference>
<dbReference type="HAMAP" id="MF_01803">
    <property type="entry name" value="MukF"/>
    <property type="match status" value="1"/>
</dbReference>
<dbReference type="InterPro" id="IPR005582">
    <property type="entry name" value="Chromosome_partition_MukF"/>
</dbReference>
<dbReference type="InterPro" id="IPR033441">
    <property type="entry name" value="MukF_C"/>
</dbReference>
<dbReference type="InterPro" id="IPR038198">
    <property type="entry name" value="MukF_C_sf"/>
</dbReference>
<dbReference type="InterPro" id="IPR033440">
    <property type="entry name" value="MukF_M"/>
</dbReference>
<dbReference type="InterPro" id="IPR036141">
    <property type="entry name" value="MukF_M_sp"/>
</dbReference>
<dbReference type="InterPro" id="IPR033439">
    <property type="entry name" value="MukF_WHTH"/>
</dbReference>
<dbReference type="InterPro" id="IPR036388">
    <property type="entry name" value="WH-like_DNA-bd_sf"/>
</dbReference>
<dbReference type="InterPro" id="IPR036390">
    <property type="entry name" value="WH_DNA-bd_sf"/>
</dbReference>
<dbReference type="NCBIfam" id="NF003615">
    <property type="entry name" value="PRK05260.1"/>
    <property type="match status" value="1"/>
</dbReference>
<dbReference type="Pfam" id="PF03882">
    <property type="entry name" value="KicB"/>
    <property type="match status" value="1"/>
</dbReference>
<dbReference type="Pfam" id="PF17193">
    <property type="entry name" value="MukF_C"/>
    <property type="match status" value="1"/>
</dbReference>
<dbReference type="Pfam" id="PF17192">
    <property type="entry name" value="MukF_M"/>
    <property type="match status" value="1"/>
</dbReference>
<dbReference type="PIRSF" id="PIRSF018282">
    <property type="entry name" value="MukF"/>
    <property type="match status" value="1"/>
</dbReference>
<dbReference type="SUPFAM" id="SSF140570">
    <property type="entry name" value="MukF C-terminal domain-like"/>
    <property type="match status" value="1"/>
</dbReference>
<dbReference type="SUPFAM" id="SSF46785">
    <property type="entry name" value="Winged helix' DNA-binding domain"/>
    <property type="match status" value="1"/>
</dbReference>
<gene>
    <name evidence="1" type="primary">mukF</name>
    <name type="ordered locus">ECH74115_1083</name>
</gene>
<reference key="1">
    <citation type="journal article" date="2011" name="Proc. Natl. Acad. Sci. U.S.A.">
        <title>Genomic anatomy of Escherichia coli O157:H7 outbreaks.</title>
        <authorList>
            <person name="Eppinger M."/>
            <person name="Mammel M.K."/>
            <person name="Leclerc J.E."/>
            <person name="Ravel J."/>
            <person name="Cebula T.A."/>
        </authorList>
    </citation>
    <scope>NUCLEOTIDE SEQUENCE [LARGE SCALE GENOMIC DNA]</scope>
    <source>
        <strain>EC4115 / EHEC</strain>
    </source>
</reference>
<sequence length="440" mass="50533">MSEFSQTVPELVAWARKNDFSISLPVDRLSFLLAVATLNGERLDGEMSEGELVDAFRHVSDAFEQTSETIGVRANNAINDMVRQRLLNRFTSEQAEGNAIYRLTPLGIGITDYYIRQREFSTLRLSMQLSIVAGELKRAADAAEEGGDEFHWHRNVYAPLKYSVAEIFDSIDLTQRLMDEQQQQVKDDIAQLLNKDWRAAISSCELLLSETSGTLRELQDTLEAAGDKLQANLLRIQDATMTHDDLHFVDRLVFDLQSKLDRIISWGQQSIDLWIGYDRHVHKFIRTAIDMDKNRVFAQRLRQSVQTYFDEPWALSYANADRLLDMRDEEMALRDEEVTGELPPDLEYEEFNEIREQLAAIIEEQLAVYKTRQVPLDLGLVVREYLSQYPRARHFDVARIVIDQAVRLGVAQADFTGLPAKWQPINDYGAKVQAHVIDKY</sequence>
<proteinExistence type="inferred from homology"/>
<organism>
    <name type="scientific">Escherichia coli O157:H7 (strain EC4115 / EHEC)</name>
    <dbReference type="NCBI Taxonomy" id="444450"/>
    <lineage>
        <taxon>Bacteria</taxon>
        <taxon>Pseudomonadati</taxon>
        <taxon>Pseudomonadota</taxon>
        <taxon>Gammaproteobacteria</taxon>
        <taxon>Enterobacterales</taxon>
        <taxon>Enterobacteriaceae</taxon>
        <taxon>Escherichia</taxon>
    </lineage>
</organism>
<evidence type="ECO:0000255" key="1">
    <source>
        <dbReference type="HAMAP-Rule" id="MF_01803"/>
    </source>
</evidence>
<protein>
    <recommendedName>
        <fullName evidence="1">Chromosome partition protein MukF</fullName>
    </recommendedName>
</protein>